<comment type="function">
    <text evidence="1">Produces ATP from ADP in the presence of a proton gradient across the membrane. The catalytic sites are hosted primarily by the beta subunits.</text>
</comment>
<comment type="catalytic activity">
    <reaction evidence="1">
        <text>ATP + H2O + 4 H(+)(in) = ADP + phosphate + 5 H(+)(out)</text>
        <dbReference type="Rhea" id="RHEA:57720"/>
        <dbReference type="ChEBI" id="CHEBI:15377"/>
        <dbReference type="ChEBI" id="CHEBI:15378"/>
        <dbReference type="ChEBI" id="CHEBI:30616"/>
        <dbReference type="ChEBI" id="CHEBI:43474"/>
        <dbReference type="ChEBI" id="CHEBI:456216"/>
        <dbReference type="EC" id="7.1.2.2"/>
    </reaction>
</comment>
<comment type="subunit">
    <text evidence="1">F-type ATPases have 2 components, CF(1) - the catalytic core - and CF(0) - the membrane proton channel. CF(1) has five subunits: alpha(3), beta(3), gamma(1), delta(1), epsilon(1). CF(0) has three main subunits: a(1), b(2) and c(9-12). The alpha and beta chains form an alternating ring which encloses part of the gamma chain. CF(1) is attached to CF(0) by a central stalk formed by the gamma and epsilon chains, while a peripheral stalk is formed by the delta and b chains.</text>
</comment>
<comment type="subcellular location">
    <subcellularLocation>
        <location evidence="1">Cell membrane</location>
        <topology evidence="1">Peripheral membrane protein</topology>
    </subcellularLocation>
</comment>
<comment type="similarity">
    <text evidence="1">Belongs to the ATPase alpha/beta chains family.</text>
</comment>
<organism>
    <name type="scientific">Streptococcus pyogenes serotype M5 (strain Manfredo)</name>
    <dbReference type="NCBI Taxonomy" id="160491"/>
    <lineage>
        <taxon>Bacteria</taxon>
        <taxon>Bacillati</taxon>
        <taxon>Bacillota</taxon>
        <taxon>Bacilli</taxon>
        <taxon>Lactobacillales</taxon>
        <taxon>Streptococcaceae</taxon>
        <taxon>Streptococcus</taxon>
    </lineage>
</organism>
<name>ATPB_STRPG</name>
<feature type="chain" id="PRO_1000055170" description="ATP synthase subunit beta">
    <location>
        <begin position="1"/>
        <end position="468"/>
    </location>
</feature>
<feature type="binding site" evidence="1">
    <location>
        <begin position="155"/>
        <end position="162"/>
    </location>
    <ligand>
        <name>ATP</name>
        <dbReference type="ChEBI" id="CHEBI:30616"/>
    </ligand>
</feature>
<dbReference type="EC" id="7.1.2.2" evidence="1"/>
<dbReference type="EMBL" id="AM295007">
    <property type="protein sequence ID" value="CAM30551.1"/>
    <property type="molecule type" value="Genomic_DNA"/>
</dbReference>
<dbReference type="RefSeq" id="WP_003057452.1">
    <property type="nucleotide sequence ID" value="NC_009332.1"/>
</dbReference>
<dbReference type="SMR" id="A2RFC2"/>
<dbReference type="GeneID" id="83690373"/>
<dbReference type="KEGG" id="spf:SpyM51227"/>
<dbReference type="HOGENOM" id="CLU_022398_0_2_9"/>
<dbReference type="GO" id="GO:0005886">
    <property type="term" value="C:plasma membrane"/>
    <property type="evidence" value="ECO:0007669"/>
    <property type="project" value="UniProtKB-SubCell"/>
</dbReference>
<dbReference type="GO" id="GO:0045259">
    <property type="term" value="C:proton-transporting ATP synthase complex"/>
    <property type="evidence" value="ECO:0007669"/>
    <property type="project" value="UniProtKB-KW"/>
</dbReference>
<dbReference type="GO" id="GO:0005524">
    <property type="term" value="F:ATP binding"/>
    <property type="evidence" value="ECO:0007669"/>
    <property type="project" value="UniProtKB-UniRule"/>
</dbReference>
<dbReference type="GO" id="GO:0016887">
    <property type="term" value="F:ATP hydrolysis activity"/>
    <property type="evidence" value="ECO:0007669"/>
    <property type="project" value="InterPro"/>
</dbReference>
<dbReference type="GO" id="GO:0046933">
    <property type="term" value="F:proton-transporting ATP synthase activity, rotational mechanism"/>
    <property type="evidence" value="ECO:0007669"/>
    <property type="project" value="UniProtKB-UniRule"/>
</dbReference>
<dbReference type="CDD" id="cd18110">
    <property type="entry name" value="ATP-synt_F1_beta_C"/>
    <property type="match status" value="1"/>
</dbReference>
<dbReference type="CDD" id="cd18115">
    <property type="entry name" value="ATP-synt_F1_beta_N"/>
    <property type="match status" value="1"/>
</dbReference>
<dbReference type="CDD" id="cd01133">
    <property type="entry name" value="F1-ATPase_beta_CD"/>
    <property type="match status" value="1"/>
</dbReference>
<dbReference type="FunFam" id="1.10.1140.10:FF:000001">
    <property type="entry name" value="ATP synthase subunit beta"/>
    <property type="match status" value="1"/>
</dbReference>
<dbReference type="FunFam" id="2.40.10.170:FF:000005">
    <property type="entry name" value="ATP synthase subunit beta"/>
    <property type="match status" value="1"/>
</dbReference>
<dbReference type="FunFam" id="3.40.50.300:FF:000004">
    <property type="entry name" value="ATP synthase subunit beta"/>
    <property type="match status" value="1"/>
</dbReference>
<dbReference type="Gene3D" id="2.40.10.170">
    <property type="match status" value="1"/>
</dbReference>
<dbReference type="Gene3D" id="1.10.1140.10">
    <property type="entry name" value="Bovine Mitochondrial F1-atpase, Atp Synthase Beta Chain, Chain D, domain 3"/>
    <property type="match status" value="1"/>
</dbReference>
<dbReference type="Gene3D" id="3.40.50.300">
    <property type="entry name" value="P-loop containing nucleotide triphosphate hydrolases"/>
    <property type="match status" value="1"/>
</dbReference>
<dbReference type="HAMAP" id="MF_01347">
    <property type="entry name" value="ATP_synth_beta_bact"/>
    <property type="match status" value="1"/>
</dbReference>
<dbReference type="InterPro" id="IPR003593">
    <property type="entry name" value="AAA+_ATPase"/>
</dbReference>
<dbReference type="InterPro" id="IPR055190">
    <property type="entry name" value="ATP-synt_VA_C"/>
</dbReference>
<dbReference type="InterPro" id="IPR005722">
    <property type="entry name" value="ATP_synth_F1_bsu"/>
</dbReference>
<dbReference type="InterPro" id="IPR020003">
    <property type="entry name" value="ATPase_a/bsu_AS"/>
</dbReference>
<dbReference type="InterPro" id="IPR050053">
    <property type="entry name" value="ATPase_alpha/beta_chains"/>
</dbReference>
<dbReference type="InterPro" id="IPR004100">
    <property type="entry name" value="ATPase_F1/V1/A1_a/bsu_N"/>
</dbReference>
<dbReference type="InterPro" id="IPR036121">
    <property type="entry name" value="ATPase_F1/V1/A1_a/bsu_N_sf"/>
</dbReference>
<dbReference type="InterPro" id="IPR000194">
    <property type="entry name" value="ATPase_F1/V1/A1_a/bsu_nucl-bd"/>
</dbReference>
<dbReference type="InterPro" id="IPR024034">
    <property type="entry name" value="ATPase_F1/V1_b/a_C"/>
</dbReference>
<dbReference type="InterPro" id="IPR027417">
    <property type="entry name" value="P-loop_NTPase"/>
</dbReference>
<dbReference type="NCBIfam" id="TIGR01039">
    <property type="entry name" value="atpD"/>
    <property type="match status" value="1"/>
</dbReference>
<dbReference type="PANTHER" id="PTHR15184">
    <property type="entry name" value="ATP SYNTHASE"/>
    <property type="match status" value="1"/>
</dbReference>
<dbReference type="PANTHER" id="PTHR15184:SF71">
    <property type="entry name" value="ATP SYNTHASE SUBUNIT BETA, MITOCHONDRIAL"/>
    <property type="match status" value="1"/>
</dbReference>
<dbReference type="Pfam" id="PF00006">
    <property type="entry name" value="ATP-synt_ab"/>
    <property type="match status" value="1"/>
</dbReference>
<dbReference type="Pfam" id="PF02874">
    <property type="entry name" value="ATP-synt_ab_N"/>
    <property type="match status" value="1"/>
</dbReference>
<dbReference type="Pfam" id="PF22919">
    <property type="entry name" value="ATP-synt_VA_C"/>
    <property type="match status" value="1"/>
</dbReference>
<dbReference type="SMART" id="SM00382">
    <property type="entry name" value="AAA"/>
    <property type="match status" value="1"/>
</dbReference>
<dbReference type="SUPFAM" id="SSF47917">
    <property type="entry name" value="C-terminal domain of alpha and beta subunits of F1 ATP synthase"/>
    <property type="match status" value="1"/>
</dbReference>
<dbReference type="SUPFAM" id="SSF50615">
    <property type="entry name" value="N-terminal domain of alpha and beta subunits of F1 ATP synthase"/>
    <property type="match status" value="1"/>
</dbReference>
<dbReference type="SUPFAM" id="SSF52540">
    <property type="entry name" value="P-loop containing nucleoside triphosphate hydrolases"/>
    <property type="match status" value="1"/>
</dbReference>
<dbReference type="PROSITE" id="PS00152">
    <property type="entry name" value="ATPASE_ALPHA_BETA"/>
    <property type="match status" value="1"/>
</dbReference>
<proteinExistence type="inferred from homology"/>
<gene>
    <name evidence="1" type="primary">atpD</name>
    <name type="ordered locus">SpyM51227</name>
</gene>
<protein>
    <recommendedName>
        <fullName evidence="1">ATP synthase subunit beta</fullName>
        <ecNumber evidence="1">7.1.2.2</ecNumber>
    </recommendedName>
    <alternativeName>
        <fullName evidence="1">ATP synthase F1 sector subunit beta</fullName>
    </alternativeName>
    <alternativeName>
        <fullName evidence="1">F-ATPase subunit beta</fullName>
    </alternativeName>
</protein>
<sequence>MSSGKIAQVVGPVVDVMFASGDKLPEINNALIVYKDSDKKQKIVLEVALELGDGMVRTIAMESTDGLTRGLEVLDTGRAISVPVGKETLGRVFNVLGETIDLEEPFAEDVDRQPIHKKAPSFDELSTSSEILETGIKVIDLLAPYLKGGKVGLFGGAGVGKTVLIQELIHNIAQEHGGISVFTGVGERTREGNDLYWEMKESGVIEKTAMVFGQMNEPPGARMRVALTGLTIAEYFRDVEGQDVLLFIDNIFRFTQAGSEVSALLGRMPSAVGYQPTLATEMGQLQERITSTQKGSVTSIQAIYVPADDYTDPAPATAFAHLDSTTNLERKLTQMGIYPAVDPLASSSRALSPEIVGEEHYAVATEVQRVLQRYRELQDIIAILGMDELSDEEKTLVGRARRIQFFLSQNFNVAEQFTGLPGSYVPVADTVRGFKEILEGKYDDLPEDAFRSVGPIEDVIKKAEKMGF</sequence>
<reference key="1">
    <citation type="journal article" date="2007" name="J. Bacteriol.">
        <title>Complete genome of acute rheumatic fever-associated serotype M5 Streptococcus pyogenes strain Manfredo.</title>
        <authorList>
            <person name="Holden M.T.G."/>
            <person name="Scott A."/>
            <person name="Cherevach I."/>
            <person name="Chillingworth T."/>
            <person name="Churcher C."/>
            <person name="Cronin A."/>
            <person name="Dowd L."/>
            <person name="Feltwell T."/>
            <person name="Hamlin N."/>
            <person name="Holroyd S."/>
            <person name="Jagels K."/>
            <person name="Moule S."/>
            <person name="Mungall K."/>
            <person name="Quail M.A."/>
            <person name="Price C."/>
            <person name="Rabbinowitsch E."/>
            <person name="Sharp S."/>
            <person name="Skelton J."/>
            <person name="Whitehead S."/>
            <person name="Barrell B.G."/>
            <person name="Kehoe M."/>
            <person name="Parkhill J."/>
        </authorList>
    </citation>
    <scope>NUCLEOTIDE SEQUENCE [LARGE SCALE GENOMIC DNA]</scope>
    <source>
        <strain>Manfredo</strain>
    </source>
</reference>
<evidence type="ECO:0000255" key="1">
    <source>
        <dbReference type="HAMAP-Rule" id="MF_01347"/>
    </source>
</evidence>
<accession>A2RFC2</accession>
<keyword id="KW-0066">ATP synthesis</keyword>
<keyword id="KW-0067">ATP-binding</keyword>
<keyword id="KW-1003">Cell membrane</keyword>
<keyword id="KW-0139">CF(1)</keyword>
<keyword id="KW-0375">Hydrogen ion transport</keyword>
<keyword id="KW-0406">Ion transport</keyword>
<keyword id="KW-0472">Membrane</keyword>
<keyword id="KW-0547">Nucleotide-binding</keyword>
<keyword id="KW-1278">Translocase</keyword>
<keyword id="KW-0813">Transport</keyword>